<name>REN3A_HUMAN</name>
<comment type="function">
    <text evidence="3 6">Involved in nonsense-mediated decay (NMD) of mRNAs containing premature stop codons by associating with the nuclear exon junction complex (EJC) and serving as link between the EJC core and NMD machinery. Recruits UPF2 at the cytoplasmic side of the nuclear envelope and the subsequent formation of an UPF1-UPF2-UPF3 surveillance complex (including UPF1 bound to release factors at the stalled ribosome) is believed to activate NMD. However, UPF3A is shown to be only marginally active in NMD as compared to UPF3B. Binds spliced mRNA upstream of exon-exon junctions. In vitro, weakly stimulates translation.</text>
</comment>
<comment type="subunit">
    <text evidence="2 3 4 5 7">Found in a post-splicing messenger ribonucleoprotein (mRNP) complex. Associates with the exon junction complex (EJC). Interacts with UPF2 and RBM8A. Interacts with DHX34; the interaction is RNA-independent (PubMed:25220460).</text>
</comment>
<comment type="interaction">
    <interactant intactId="EBI-521530">
        <id>Q9H1J1</id>
    </interactant>
    <interactant intactId="EBI-447231">
        <id>Q9Y5S9</id>
        <label>RBM8A</label>
    </interactant>
    <organismsDiffer>false</organismsDiffer>
    <experiments>4</experiments>
</comment>
<comment type="interaction">
    <interactant intactId="EBI-521530">
        <id>Q9H1J1</id>
    </interactant>
    <interactant intactId="EBI-373471">
        <id>Q92900</id>
        <label>UPF1</label>
    </interactant>
    <organismsDiffer>false</organismsDiffer>
    <experiments>4</experiments>
</comment>
<comment type="interaction">
    <interactant intactId="EBI-521530">
        <id>Q9H1J1</id>
    </interactant>
    <interactant intactId="EBI-372073">
        <id>Q9HAU5</id>
        <label>UPF2</label>
    </interactant>
    <organismsDiffer>false</organismsDiffer>
    <experiments>5</experiments>
</comment>
<comment type="interaction">
    <interactant intactId="EBI-521530">
        <id>Q9H1J1</id>
    </interactant>
    <interactant intactId="EBI-15674130">
        <id>Q9BZI7-2</id>
        <label>UPF3B</label>
    </interactant>
    <organismsDiffer>false</organismsDiffer>
    <experiments>2</experiments>
</comment>
<comment type="subcellular location">
    <subcellularLocation>
        <location evidence="3">Nucleus</location>
    </subcellularLocation>
    <subcellularLocation>
        <location evidence="3">Cytoplasm</location>
    </subcellularLocation>
    <text evidence="3">Shuttling between the nucleus and the cytoplasm.</text>
</comment>
<comment type="alternative products">
    <event type="alternative splicing"/>
    <isoform>
        <id>Q9H1J1-1</id>
        <name>1</name>
        <name>hUpf3p</name>
        <name>hUPF3L</name>
        <sequence type="displayed"/>
    </isoform>
    <isoform>
        <id>Q9H1J1-2</id>
        <name>2</name>
        <name>hUpf3pdelta</name>
        <name>hUPF3S</name>
        <sequence type="described" ref="VSP_012962"/>
    </isoform>
    <isoform>
        <id>Q9H1J1-3</id>
        <name>3</name>
        <sequence type="described" ref="VSP_012961"/>
    </isoform>
</comment>
<comment type="tissue specificity">
    <text evidence="2">Isoform 1 is strongly expressed in testis, uterus, muscle, fetal brain and spinal cord. Isoform 2 is strongly expressed in fetal brain and spinal cord.</text>
</comment>
<comment type="similarity">
    <text evidence="9">Belongs to the RENT3 family.</text>
</comment>
<proteinExistence type="evidence at protein level"/>
<protein>
    <recommendedName>
        <fullName>Regulator of nonsense transcripts 3A</fullName>
    </recommendedName>
    <alternativeName>
        <fullName>Nonsense mRNA reducing factor 3A</fullName>
    </alternativeName>
    <alternativeName>
        <fullName>Up-frameshift suppressor 3 homolog A</fullName>
        <shortName>hUpf3</shortName>
    </alternativeName>
</protein>
<dbReference type="EMBL" id="AY013250">
    <property type="protein sequence ID" value="AAG48510.1"/>
    <property type="molecule type" value="mRNA"/>
</dbReference>
<dbReference type="EMBL" id="AL160396">
    <property type="status" value="NOT_ANNOTATED_CDS"/>
    <property type="molecule type" value="Genomic_DNA"/>
</dbReference>
<dbReference type="EMBL" id="CH471085">
    <property type="protein sequence ID" value="EAX09252.1"/>
    <property type="molecule type" value="Genomic_DNA"/>
</dbReference>
<dbReference type="EMBL" id="BC008694">
    <property type="protein sequence ID" value="AAH08694.1"/>
    <property type="molecule type" value="mRNA"/>
</dbReference>
<dbReference type="EMBL" id="BC023569">
    <property type="protein sequence ID" value="AAH23569.1"/>
    <property type="molecule type" value="mRNA"/>
</dbReference>
<dbReference type="EMBL" id="AF318575">
    <property type="protein sequence ID" value="AAG60690.1"/>
    <property type="molecule type" value="mRNA"/>
</dbReference>
<dbReference type="CCDS" id="CCDS9543.1">
    <molecule id="Q9H1J1-1"/>
</dbReference>
<dbReference type="CCDS" id="CCDS9544.1">
    <molecule id="Q9H1J1-2"/>
</dbReference>
<dbReference type="RefSeq" id="NP_075387.1">
    <molecule id="Q9H1J1-1"/>
    <property type="nucleotide sequence ID" value="NM_023011.4"/>
</dbReference>
<dbReference type="RefSeq" id="NP_542418.1">
    <molecule id="Q9H1J1-2"/>
    <property type="nucleotide sequence ID" value="NM_080687.3"/>
</dbReference>
<dbReference type="PDB" id="2L08">
    <property type="method" value="NMR"/>
    <property type="chains" value="A=70-155"/>
</dbReference>
<dbReference type="PDB" id="7QG6">
    <property type="method" value="X-ray"/>
    <property type="resolution" value="2.95 A"/>
    <property type="chains" value="A/C/E/G=58-206"/>
</dbReference>
<dbReference type="PDBsum" id="2L08"/>
<dbReference type="PDBsum" id="7QG6"/>
<dbReference type="BMRB" id="Q9H1J1"/>
<dbReference type="SMR" id="Q9H1J1"/>
<dbReference type="BioGRID" id="122397">
    <property type="interactions" value="46"/>
</dbReference>
<dbReference type="CORUM" id="Q9H1J1"/>
<dbReference type="DIP" id="DIP-31146N"/>
<dbReference type="FunCoup" id="Q9H1J1">
    <property type="interactions" value="3695"/>
</dbReference>
<dbReference type="IntAct" id="Q9H1J1">
    <property type="interactions" value="38"/>
</dbReference>
<dbReference type="MINT" id="Q9H1J1"/>
<dbReference type="STRING" id="9606.ENSP00000364448"/>
<dbReference type="GlyGen" id="Q9H1J1">
    <property type="glycosylation" value="1 site, 1 O-linked glycan (1 site)"/>
</dbReference>
<dbReference type="iPTMnet" id="Q9H1J1"/>
<dbReference type="PhosphoSitePlus" id="Q9H1J1"/>
<dbReference type="BioMuta" id="UPF3A"/>
<dbReference type="DMDM" id="60390646"/>
<dbReference type="jPOST" id="Q9H1J1"/>
<dbReference type="MassIVE" id="Q9H1J1"/>
<dbReference type="PaxDb" id="9606-ENSP00000364448"/>
<dbReference type="PeptideAtlas" id="Q9H1J1"/>
<dbReference type="ProteomicsDB" id="80415">
    <molecule id="Q9H1J1-1"/>
</dbReference>
<dbReference type="ProteomicsDB" id="80416">
    <molecule id="Q9H1J1-2"/>
</dbReference>
<dbReference type="ProteomicsDB" id="80417">
    <molecule id="Q9H1J1-3"/>
</dbReference>
<dbReference type="Pumba" id="Q9H1J1"/>
<dbReference type="TopDownProteomics" id="Q9H1J1-2">
    <molecule id="Q9H1J1-2"/>
</dbReference>
<dbReference type="Antibodypedia" id="11926">
    <property type="antibodies" value="91 antibodies from 28 providers"/>
</dbReference>
<dbReference type="DNASU" id="65110"/>
<dbReference type="Ensembl" id="ENST00000351487.5">
    <molecule id="Q9H1J1-2"/>
    <property type="protein sequence ID" value="ENSP00000329592.5"/>
    <property type="gene ID" value="ENSG00000169062.15"/>
</dbReference>
<dbReference type="Ensembl" id="ENST00000375299.8">
    <molecule id="Q9H1J1-1"/>
    <property type="protein sequence ID" value="ENSP00000364448.3"/>
    <property type="gene ID" value="ENSG00000169062.15"/>
</dbReference>
<dbReference type="GeneID" id="65110"/>
<dbReference type="KEGG" id="hsa:65110"/>
<dbReference type="MANE-Select" id="ENST00000375299.8">
    <property type="protein sequence ID" value="ENSP00000364448.3"/>
    <property type="RefSeq nucleotide sequence ID" value="NM_023011.4"/>
    <property type="RefSeq protein sequence ID" value="NP_075387.1"/>
</dbReference>
<dbReference type="UCSC" id="uc001vup.4">
    <molecule id="Q9H1J1-1"/>
    <property type="organism name" value="human"/>
</dbReference>
<dbReference type="AGR" id="HGNC:20332"/>
<dbReference type="CTD" id="65110"/>
<dbReference type="DisGeNET" id="65110"/>
<dbReference type="GeneCards" id="UPF3A"/>
<dbReference type="HGNC" id="HGNC:20332">
    <property type="gene designation" value="UPF3A"/>
</dbReference>
<dbReference type="HPA" id="ENSG00000169062">
    <property type="expression patterns" value="Low tissue specificity"/>
</dbReference>
<dbReference type="MIM" id="605530">
    <property type="type" value="gene"/>
</dbReference>
<dbReference type="neXtProt" id="NX_Q9H1J1"/>
<dbReference type="OpenTargets" id="ENSG00000169062"/>
<dbReference type="PharmGKB" id="PA134961553"/>
<dbReference type="VEuPathDB" id="HostDB:ENSG00000169062"/>
<dbReference type="eggNOG" id="KOG1295">
    <property type="taxonomic scope" value="Eukaryota"/>
</dbReference>
<dbReference type="GeneTree" id="ENSGT00390000017146"/>
<dbReference type="HOGENOM" id="CLU_041202_1_0_1"/>
<dbReference type="InParanoid" id="Q9H1J1"/>
<dbReference type="OMA" id="FSRVYFV"/>
<dbReference type="OrthoDB" id="18087at2759"/>
<dbReference type="PAN-GO" id="Q9H1J1">
    <property type="GO annotations" value="4 GO annotations based on evolutionary models"/>
</dbReference>
<dbReference type="PhylomeDB" id="Q9H1J1"/>
<dbReference type="TreeFam" id="TF316034"/>
<dbReference type="PathwayCommons" id="Q9H1J1"/>
<dbReference type="Reactome" id="R-HSA-9010553">
    <property type="pathway name" value="Regulation of expression of SLITs and ROBOs"/>
</dbReference>
<dbReference type="Reactome" id="R-HSA-975957">
    <molecule id="Q9H1J1-2"/>
    <property type="pathway name" value="Nonsense Mediated Decay (NMD) enhanced by the Exon Junction Complex (EJC)"/>
</dbReference>
<dbReference type="SignaLink" id="Q9H1J1"/>
<dbReference type="BioGRID-ORCS" id="65110">
    <property type="hits" value="109 hits in 1128 CRISPR screens"/>
</dbReference>
<dbReference type="CD-CODE" id="91857CE7">
    <property type="entry name" value="Nucleolus"/>
</dbReference>
<dbReference type="CD-CODE" id="DEE660B4">
    <property type="entry name" value="Stress granule"/>
</dbReference>
<dbReference type="ChiTaRS" id="UPF3A">
    <property type="organism name" value="human"/>
</dbReference>
<dbReference type="EvolutionaryTrace" id="Q9H1J1"/>
<dbReference type="GeneWiki" id="UPF3A"/>
<dbReference type="GenomeRNAi" id="65110"/>
<dbReference type="Pharos" id="Q9H1J1">
    <property type="development level" value="Tbio"/>
</dbReference>
<dbReference type="PRO" id="PR:Q9H1J1"/>
<dbReference type="Proteomes" id="UP000005640">
    <property type="component" value="Chromosome 13"/>
</dbReference>
<dbReference type="RNAct" id="Q9H1J1">
    <property type="molecule type" value="protein"/>
</dbReference>
<dbReference type="Bgee" id="ENSG00000169062">
    <property type="expression patterns" value="Expressed in right hemisphere of cerebellum and 117 other cell types or tissues"/>
</dbReference>
<dbReference type="ExpressionAtlas" id="Q9H1J1">
    <property type="expression patterns" value="baseline and differential"/>
</dbReference>
<dbReference type="GO" id="GO:0005737">
    <property type="term" value="C:cytoplasm"/>
    <property type="evidence" value="ECO:0000318"/>
    <property type="project" value="GO_Central"/>
</dbReference>
<dbReference type="GO" id="GO:0005829">
    <property type="term" value="C:cytosol"/>
    <property type="evidence" value="ECO:0000304"/>
    <property type="project" value="Reactome"/>
</dbReference>
<dbReference type="GO" id="GO:0035145">
    <property type="term" value="C:exon-exon junction complex"/>
    <property type="evidence" value="ECO:0000314"/>
    <property type="project" value="GO_Central"/>
</dbReference>
<dbReference type="GO" id="GO:0043231">
    <property type="term" value="C:intracellular membrane-bounded organelle"/>
    <property type="evidence" value="ECO:0000314"/>
    <property type="project" value="HPA"/>
</dbReference>
<dbReference type="GO" id="GO:0043005">
    <property type="term" value="C:neuron projection"/>
    <property type="evidence" value="ECO:0007669"/>
    <property type="project" value="Ensembl"/>
</dbReference>
<dbReference type="GO" id="GO:0005730">
    <property type="term" value="C:nucleolus"/>
    <property type="evidence" value="ECO:0000318"/>
    <property type="project" value="GO_Central"/>
</dbReference>
<dbReference type="GO" id="GO:0005654">
    <property type="term" value="C:nucleoplasm"/>
    <property type="evidence" value="ECO:0000314"/>
    <property type="project" value="HPA"/>
</dbReference>
<dbReference type="GO" id="GO:0005634">
    <property type="term" value="C:nucleus"/>
    <property type="evidence" value="ECO:0000303"/>
    <property type="project" value="UniProtKB"/>
</dbReference>
<dbReference type="GO" id="GO:0005886">
    <property type="term" value="C:plasma membrane"/>
    <property type="evidence" value="ECO:0000314"/>
    <property type="project" value="HPA"/>
</dbReference>
<dbReference type="GO" id="GO:0003729">
    <property type="term" value="F:mRNA binding"/>
    <property type="evidence" value="ECO:0000314"/>
    <property type="project" value="GO_Central"/>
</dbReference>
<dbReference type="GO" id="GO:0042162">
    <property type="term" value="F:telomeric DNA binding"/>
    <property type="evidence" value="ECO:0000314"/>
    <property type="project" value="BHF-UCL"/>
</dbReference>
<dbReference type="GO" id="GO:0001701">
    <property type="term" value="P:in utero embryonic development"/>
    <property type="evidence" value="ECO:0007669"/>
    <property type="project" value="Ensembl"/>
</dbReference>
<dbReference type="GO" id="GO:0051028">
    <property type="term" value="P:mRNA transport"/>
    <property type="evidence" value="ECO:0007669"/>
    <property type="project" value="UniProtKB-KW"/>
</dbReference>
<dbReference type="GO" id="GO:2000623">
    <property type="term" value="P:negative regulation of nuclear-transcribed mRNA catabolic process, nonsense-mediated decay"/>
    <property type="evidence" value="ECO:0007669"/>
    <property type="project" value="Ensembl"/>
</dbReference>
<dbReference type="GO" id="GO:1905746">
    <property type="term" value="P:positive regulation of mRNA cis splicing, via spliceosome"/>
    <property type="evidence" value="ECO:0007669"/>
    <property type="project" value="Ensembl"/>
</dbReference>
<dbReference type="GO" id="GO:0045727">
    <property type="term" value="P:positive regulation of translation"/>
    <property type="evidence" value="ECO:0000314"/>
    <property type="project" value="UniProtKB"/>
</dbReference>
<dbReference type="GO" id="GO:0007283">
    <property type="term" value="P:spermatogenesis"/>
    <property type="evidence" value="ECO:0007669"/>
    <property type="project" value="Ensembl"/>
</dbReference>
<dbReference type="CDD" id="cd12727">
    <property type="entry name" value="RRM_like_Smg4_UPF3A"/>
    <property type="match status" value="1"/>
</dbReference>
<dbReference type="FunFam" id="3.30.70.330:FF:000067">
    <property type="entry name" value="regulator of nonsense transcripts 3A isoform X2"/>
    <property type="match status" value="1"/>
</dbReference>
<dbReference type="Gene3D" id="3.30.70.330">
    <property type="match status" value="1"/>
</dbReference>
<dbReference type="InterPro" id="IPR012677">
    <property type="entry name" value="Nucleotide-bd_a/b_plait_sf"/>
</dbReference>
<dbReference type="InterPro" id="IPR035979">
    <property type="entry name" value="RBD_domain_sf"/>
</dbReference>
<dbReference type="InterPro" id="IPR039722">
    <property type="entry name" value="Upf3"/>
</dbReference>
<dbReference type="InterPro" id="IPR005120">
    <property type="entry name" value="UPF3_dom"/>
</dbReference>
<dbReference type="PANTHER" id="PTHR13112:SF2">
    <property type="entry name" value="REGULATOR OF NONSENSE TRANSCRIPTS 3A"/>
    <property type="match status" value="1"/>
</dbReference>
<dbReference type="PANTHER" id="PTHR13112">
    <property type="entry name" value="UPF3 REGULATOR OF NONSENSE TRANSCRIPTS-LIKE PROTEIN"/>
    <property type="match status" value="1"/>
</dbReference>
<dbReference type="Pfam" id="PF03467">
    <property type="entry name" value="Smg4_UPF3"/>
    <property type="match status" value="1"/>
</dbReference>
<dbReference type="SUPFAM" id="SSF54928">
    <property type="entry name" value="RNA-binding domain, RBD"/>
    <property type="match status" value="1"/>
</dbReference>
<evidence type="ECO:0000256" key="1">
    <source>
        <dbReference type="SAM" id="MobiDB-lite"/>
    </source>
</evidence>
<evidence type="ECO:0000269" key="2">
    <source>
    </source>
</evidence>
<evidence type="ECO:0000269" key="3">
    <source>
    </source>
</evidence>
<evidence type="ECO:0000269" key="4">
    <source>
    </source>
</evidence>
<evidence type="ECO:0000269" key="5">
    <source>
    </source>
</evidence>
<evidence type="ECO:0000269" key="6">
    <source>
    </source>
</evidence>
<evidence type="ECO:0000269" key="7">
    <source>
    </source>
</evidence>
<evidence type="ECO:0000303" key="8">
    <source>
    </source>
</evidence>
<evidence type="ECO:0000305" key="9"/>
<evidence type="ECO:0007744" key="10">
    <source>
    </source>
</evidence>
<evidence type="ECO:0007829" key="11">
    <source>
        <dbReference type="PDB" id="7QG6"/>
    </source>
</evidence>
<accession>Q9H1J1</accession>
<accession>A2A366</accession>
<accession>Q5T8C3</accession>
<accession>Q5T8C9</accession>
<accession>Q7Z6N3</accession>
<accession>Q86YK1</accession>
<accession>Q9BZI8</accession>
<feature type="chain" id="PRO_0000215296" description="Regulator of nonsense transcripts 3A">
    <location>
        <begin position="1"/>
        <end position="476"/>
    </location>
</feature>
<feature type="region of interest" description="Disordered" evidence="1">
    <location>
        <begin position="1"/>
        <end position="63"/>
    </location>
</feature>
<feature type="region of interest" description="Required for interaction with UPF2">
    <location>
        <begin position="66"/>
        <end position="140"/>
    </location>
</feature>
<feature type="region of interest" description="Disordered" evidence="1">
    <location>
        <begin position="250"/>
        <end position="476"/>
    </location>
</feature>
<feature type="region of interest" description="Required for association with EIF4A3 and ECJ core components CASC3, MAGOH and RBM8A">
    <location>
        <begin position="421"/>
        <end position="434"/>
    </location>
</feature>
<feature type="compositionally biased region" description="Basic and acidic residues" evidence="1">
    <location>
        <begin position="21"/>
        <end position="38"/>
    </location>
</feature>
<feature type="compositionally biased region" description="Basic and acidic residues" evidence="1">
    <location>
        <begin position="250"/>
        <end position="304"/>
    </location>
</feature>
<feature type="compositionally biased region" description="Basic and acidic residues" evidence="1">
    <location>
        <begin position="340"/>
        <end position="401"/>
    </location>
</feature>
<feature type="compositionally biased region" description="Basic and acidic residues" evidence="1">
    <location>
        <begin position="410"/>
        <end position="437"/>
    </location>
</feature>
<feature type="modified residue" description="Phosphoserine" evidence="10">
    <location>
        <position position="341"/>
    </location>
</feature>
<feature type="splice variant" id="VSP_012961" description="In isoform 3." evidence="8">
    <location>
        <begin position="1"/>
        <end position="325"/>
    </location>
</feature>
<feature type="splice variant" id="VSP_012962" description="In isoform 2." evidence="8">
    <location>
        <begin position="141"/>
        <end position="173"/>
    </location>
</feature>
<feature type="sequence variant" id="VAR_062143" description="In dbSNP:rs3752105.">
    <original>R</original>
    <variation>K</variation>
    <location>
        <position position="64"/>
    </location>
</feature>
<feature type="mutagenesis site" description="Increases NMD activity and translation stimulation." evidence="6">
    <original>A</original>
    <variation>R</variation>
    <location>
        <position position="432"/>
    </location>
</feature>
<feature type="sequence conflict" description="In Ref. 5; AAG60690." evidence="9" ref="5">
    <original>K</original>
    <variation>M</variation>
    <location>
        <position position="25"/>
    </location>
</feature>
<feature type="strand" evidence="11">
    <location>
        <begin position="69"/>
        <end position="75"/>
    </location>
</feature>
<feature type="helix" evidence="11">
    <location>
        <begin position="81"/>
        <end position="87"/>
    </location>
</feature>
<feature type="strand" evidence="11">
    <location>
        <begin position="94"/>
        <end position="100"/>
    </location>
</feature>
<feature type="strand" evidence="11">
    <location>
        <begin position="104"/>
        <end position="106"/>
    </location>
</feature>
<feature type="strand" evidence="11">
    <location>
        <begin position="112"/>
        <end position="120"/>
    </location>
</feature>
<feature type="turn" evidence="11">
    <location>
        <begin position="121"/>
        <end position="123"/>
    </location>
</feature>
<feature type="helix" evidence="11">
    <location>
        <begin position="124"/>
        <end position="131"/>
    </location>
</feature>
<feature type="strand" evidence="11">
    <location>
        <begin position="135"/>
        <end position="137"/>
    </location>
</feature>
<feature type="strand" evidence="11">
    <location>
        <begin position="143"/>
        <end position="145"/>
    </location>
</feature>
<feature type="strand" evidence="11">
    <location>
        <begin position="147"/>
        <end position="150"/>
    </location>
</feature>
<feature type="helix" evidence="11">
    <location>
        <begin position="171"/>
        <end position="173"/>
    </location>
</feature>
<feature type="helix" evidence="11">
    <location>
        <begin position="175"/>
        <end position="184"/>
    </location>
</feature>
<keyword id="KW-0002">3D-structure</keyword>
<keyword id="KW-0025">Alternative splicing</keyword>
<keyword id="KW-0963">Cytoplasm</keyword>
<keyword id="KW-0509">mRNA transport</keyword>
<keyword id="KW-0866">Nonsense-mediated mRNA decay</keyword>
<keyword id="KW-0539">Nucleus</keyword>
<keyword id="KW-0597">Phosphoprotein</keyword>
<keyword id="KW-1267">Proteomics identification</keyword>
<keyword id="KW-1185">Reference proteome</keyword>
<keyword id="KW-0694">RNA-binding</keyword>
<keyword id="KW-0813">Transport</keyword>
<reference key="1">
    <citation type="journal article" date="2000" name="Cell">
        <title>Human Upf proteins target an mRNA for nonsense-mediated decay when bound downstream of a termination codon.</title>
        <authorList>
            <person name="Lykke-Andersen J."/>
            <person name="Shu M.-D."/>
            <person name="Steitz J.A."/>
        </authorList>
    </citation>
    <scope>NUCLEOTIDE SEQUENCE [MRNA] (ISOFORM 1)</scope>
    <scope>FUNCTION IN NONSENSE-MEDIATED MRNA DECAY</scope>
    <scope>INTERACTION WITH UPF1 AND UPF2</scope>
    <scope>SUBCELLULAR LOCATION</scope>
</reference>
<reference key="2">
    <citation type="journal article" date="2004" name="Nature">
        <title>The DNA sequence and analysis of human chromosome 13.</title>
        <authorList>
            <person name="Dunham A."/>
            <person name="Matthews L.H."/>
            <person name="Burton J."/>
            <person name="Ashurst J.L."/>
            <person name="Howe K.L."/>
            <person name="Ashcroft K.J."/>
            <person name="Beare D.M."/>
            <person name="Burford D.C."/>
            <person name="Hunt S.E."/>
            <person name="Griffiths-Jones S."/>
            <person name="Jones M.C."/>
            <person name="Keenan S.J."/>
            <person name="Oliver K."/>
            <person name="Scott C.E."/>
            <person name="Ainscough R."/>
            <person name="Almeida J.P."/>
            <person name="Ambrose K.D."/>
            <person name="Andrews D.T."/>
            <person name="Ashwell R.I.S."/>
            <person name="Babbage A.K."/>
            <person name="Bagguley C.L."/>
            <person name="Bailey J."/>
            <person name="Bannerjee R."/>
            <person name="Barlow K.F."/>
            <person name="Bates K."/>
            <person name="Beasley H."/>
            <person name="Bird C.P."/>
            <person name="Bray-Allen S."/>
            <person name="Brown A.J."/>
            <person name="Brown J.Y."/>
            <person name="Burrill W."/>
            <person name="Carder C."/>
            <person name="Carter N.P."/>
            <person name="Chapman J.C."/>
            <person name="Clamp M.E."/>
            <person name="Clark S.Y."/>
            <person name="Clarke G."/>
            <person name="Clee C.M."/>
            <person name="Clegg S.C."/>
            <person name="Cobley V."/>
            <person name="Collins J.E."/>
            <person name="Corby N."/>
            <person name="Coville G.J."/>
            <person name="Deloukas P."/>
            <person name="Dhami P."/>
            <person name="Dunham I."/>
            <person name="Dunn M."/>
            <person name="Earthrowl M.E."/>
            <person name="Ellington A.G."/>
            <person name="Faulkner L."/>
            <person name="Frankish A.G."/>
            <person name="Frankland J."/>
            <person name="French L."/>
            <person name="Garner P."/>
            <person name="Garnett J."/>
            <person name="Gilbert J.G.R."/>
            <person name="Gilson C.J."/>
            <person name="Ghori J."/>
            <person name="Grafham D.V."/>
            <person name="Gribble S.M."/>
            <person name="Griffiths C."/>
            <person name="Hall R.E."/>
            <person name="Hammond S."/>
            <person name="Harley J.L."/>
            <person name="Hart E.A."/>
            <person name="Heath P.D."/>
            <person name="Howden P.J."/>
            <person name="Huckle E.J."/>
            <person name="Hunt P.J."/>
            <person name="Hunt A.R."/>
            <person name="Johnson C."/>
            <person name="Johnson D."/>
            <person name="Kay M."/>
            <person name="Kimberley A.M."/>
            <person name="King A."/>
            <person name="Laird G.K."/>
            <person name="Langford C.J."/>
            <person name="Lawlor S."/>
            <person name="Leongamornlert D.A."/>
            <person name="Lloyd D.M."/>
            <person name="Lloyd C."/>
            <person name="Loveland J.E."/>
            <person name="Lovell J."/>
            <person name="Martin S."/>
            <person name="Mashreghi-Mohammadi M."/>
            <person name="McLaren S.J."/>
            <person name="McMurray A."/>
            <person name="Milne S."/>
            <person name="Moore M.J.F."/>
            <person name="Nickerson T."/>
            <person name="Palmer S.A."/>
            <person name="Pearce A.V."/>
            <person name="Peck A.I."/>
            <person name="Pelan S."/>
            <person name="Phillimore B."/>
            <person name="Porter K.M."/>
            <person name="Rice C.M."/>
            <person name="Searle S."/>
            <person name="Sehra H.K."/>
            <person name="Shownkeen R."/>
            <person name="Skuce C.D."/>
            <person name="Smith M."/>
            <person name="Steward C.A."/>
            <person name="Sycamore N."/>
            <person name="Tester J."/>
            <person name="Thomas D.W."/>
            <person name="Tracey A."/>
            <person name="Tromans A."/>
            <person name="Tubby B."/>
            <person name="Wall M."/>
            <person name="Wallis J.M."/>
            <person name="West A.P."/>
            <person name="Whitehead S.L."/>
            <person name="Willey D.L."/>
            <person name="Wilming L."/>
            <person name="Wray P.W."/>
            <person name="Wright M.W."/>
            <person name="Young L."/>
            <person name="Coulson A."/>
            <person name="Durbin R.M."/>
            <person name="Hubbard T."/>
            <person name="Sulston J.E."/>
            <person name="Beck S."/>
            <person name="Bentley D.R."/>
            <person name="Rogers J."/>
            <person name="Ross M.T."/>
        </authorList>
    </citation>
    <scope>NUCLEOTIDE SEQUENCE [LARGE SCALE GENOMIC DNA]</scope>
</reference>
<reference key="3">
    <citation type="submission" date="2005-07" db="EMBL/GenBank/DDBJ databases">
        <authorList>
            <person name="Mural R.J."/>
            <person name="Istrail S."/>
            <person name="Sutton G.G."/>
            <person name="Florea L."/>
            <person name="Halpern A.L."/>
            <person name="Mobarry C.M."/>
            <person name="Lippert R."/>
            <person name="Walenz B."/>
            <person name="Shatkay H."/>
            <person name="Dew I."/>
            <person name="Miller J.R."/>
            <person name="Flanigan M.J."/>
            <person name="Edwards N.J."/>
            <person name="Bolanos R."/>
            <person name="Fasulo D."/>
            <person name="Halldorsson B.V."/>
            <person name="Hannenhalli S."/>
            <person name="Turner R."/>
            <person name="Yooseph S."/>
            <person name="Lu F."/>
            <person name="Nusskern D.R."/>
            <person name="Shue B.C."/>
            <person name="Zheng X.H."/>
            <person name="Zhong F."/>
            <person name="Delcher A.L."/>
            <person name="Huson D.H."/>
            <person name="Kravitz S.A."/>
            <person name="Mouchard L."/>
            <person name="Reinert K."/>
            <person name="Remington K.A."/>
            <person name="Clark A.G."/>
            <person name="Waterman M.S."/>
            <person name="Eichler E.E."/>
            <person name="Adams M.D."/>
            <person name="Hunkapiller M.W."/>
            <person name="Myers E.W."/>
            <person name="Venter J.C."/>
        </authorList>
    </citation>
    <scope>NUCLEOTIDE SEQUENCE [LARGE SCALE GENOMIC DNA]</scope>
</reference>
<reference key="4">
    <citation type="journal article" date="2004" name="Genome Res.">
        <title>The status, quality, and expansion of the NIH full-length cDNA project: the Mammalian Gene Collection (MGC).</title>
        <authorList>
            <consortium name="The MGC Project Team"/>
        </authorList>
    </citation>
    <scope>NUCLEOTIDE SEQUENCE [LARGE SCALE MRNA] (ISOFORMS 2 AND 3)</scope>
    <source>
        <tissue>Brain</tissue>
        <tissue>Eye</tissue>
    </source>
</reference>
<reference key="5">
    <citation type="journal article" date="2001" name="Mol. Cell. Biol.">
        <title>Identification and characterization of human orthologues to Saccharomyces cerevisiae Upf2 protein and Upf3 protein (Caenorhabditis elegans SMG-4).</title>
        <authorList>
            <person name="Serin G."/>
            <person name="Gersappe A."/>
            <person name="Black J.D."/>
            <person name="Aronoff R."/>
            <person name="Maquat L.E."/>
        </authorList>
    </citation>
    <scope>NUCLEOTIDE SEQUENCE [MRNA] OF 25-476 (ISOFORM 1)</scope>
    <scope>INTERACTION WITH UPF2</scope>
    <scope>SUBCELLULAR LOCATION</scope>
    <scope>TISSUE SPECIFICITY</scope>
    <source>
        <tissue>Cervix carcinoma</tissue>
    </source>
</reference>
<reference key="6">
    <citation type="journal article" date="2001" name="Science">
        <title>Role of the nonsense-mediated decay factor hUpf3 in the splicing-dependent exon-exon junction complex.</title>
        <authorList>
            <person name="Kim V.N."/>
            <person name="Kataoka N."/>
            <person name="Dreyfuss G."/>
        </authorList>
    </citation>
    <scope>INTERACTION WITH RBM8A</scope>
    <scope>IDENTIFICATION IN A POST-SPLICING MRNP COMPLEX</scope>
    <scope>ASSOCIATION WITH THE EJC COMPLEX</scope>
    <scope>RNA-BINDING</scope>
</reference>
<reference key="7">
    <citation type="journal article" date="2001" name="Science">
        <title>Communication of the position of exon-exon junctions to the mRNA surveillance machinery by the protein RNPS1.</title>
        <authorList>
            <person name="Lykke-Andersen J."/>
            <person name="Shu M.-D."/>
            <person name="Steitz J.A."/>
        </authorList>
    </citation>
    <scope>IDENTIFICATION IN A POST-SPLICING MRNP COMPLEX</scope>
    <scope>ASSOCIATION WITH THE EJC COMPLEX</scope>
</reference>
<reference key="8">
    <citation type="journal article" date="2003" name="RNA">
        <title>Characterization of human Smg5/7a: a protein with similarities to Caenorhabditis elegans SMG5 and SMG7 that functions in the dephosphorylation of Upf1.</title>
        <authorList>
            <person name="Chiu S.-Y."/>
            <person name="Serin G."/>
            <person name="Ohara O."/>
            <person name="Maquat L.E."/>
        </authorList>
    </citation>
    <scope>PROBABLE INTERACTION WITH SMG1</scope>
</reference>
<reference key="9">
    <citation type="journal article" date="2006" name="RNA">
        <title>Functions of hUpf3a and hUpf3b in nonsense-mediated mRNA decay and translation.</title>
        <authorList>
            <person name="Kunz J.B."/>
            <person name="Neu-Yilik G."/>
            <person name="Hentze M.W."/>
            <person name="Kulozik A.E."/>
            <person name="Gehring N.H."/>
        </authorList>
    </citation>
    <scope>LACK OF ACTIVITY IN NMD</scope>
    <scope>FUNCTION IN TRANSLATION STIMULATION</scope>
    <scope>PROTEIN INTERACTION</scope>
    <scope>MUTAGENESIS OF ALA-432</scope>
</reference>
<reference key="10">
    <citation type="journal article" date="2011" name="Sci. Signal.">
        <title>System-wide temporal characterization of the proteome and phosphoproteome of human embryonic stem cell differentiation.</title>
        <authorList>
            <person name="Rigbolt K.T."/>
            <person name="Prokhorova T.A."/>
            <person name="Akimov V."/>
            <person name="Henningsen J."/>
            <person name="Johansen P.T."/>
            <person name="Kratchmarova I."/>
            <person name="Kassem M."/>
            <person name="Mann M."/>
            <person name="Olsen J.V."/>
            <person name="Blagoev B."/>
        </authorList>
    </citation>
    <scope>PHOSPHORYLATION [LARGE SCALE ANALYSIS] AT SER-341</scope>
    <scope>IDENTIFICATION BY MASS SPECTROMETRY [LARGE SCALE ANALYSIS]</scope>
</reference>
<reference key="11">
    <citation type="journal article" date="2014" name="Cell Rep.">
        <title>The RNA helicase DHX34 activates NMD by promoting a transition from the surveillance to the decay-inducing complex.</title>
        <authorList>
            <person name="Hug N."/>
            <person name="Caceres J.F."/>
        </authorList>
    </citation>
    <scope>INTERACTION WITH DHX34</scope>
</reference>
<reference key="12">
    <citation type="submission" date="2010-08" db="PDB data bank">
        <title>Solution NMR structure of nonsense mRNA reducing factor 3A from H. sapiens, northeast structural genomics consortium target HR4714B.</title>
        <authorList>
            <consortium name="Northeast structural genomics consortium (NESG)"/>
        </authorList>
    </citation>
    <scope>STRUCTURE BY NMR OF 70-155</scope>
</reference>
<organism>
    <name type="scientific">Homo sapiens</name>
    <name type="common">Human</name>
    <dbReference type="NCBI Taxonomy" id="9606"/>
    <lineage>
        <taxon>Eukaryota</taxon>
        <taxon>Metazoa</taxon>
        <taxon>Chordata</taxon>
        <taxon>Craniata</taxon>
        <taxon>Vertebrata</taxon>
        <taxon>Euteleostomi</taxon>
        <taxon>Mammalia</taxon>
        <taxon>Eutheria</taxon>
        <taxon>Euarchontoglires</taxon>
        <taxon>Primates</taxon>
        <taxon>Haplorrhini</taxon>
        <taxon>Catarrhini</taxon>
        <taxon>Hominidae</taxon>
        <taxon>Homo</taxon>
    </lineage>
</organism>
<sequence length="476" mass="54696">MRSEKEGAGGLRAAVAARGPSGREKLSALEVQFHRDSQQQEAETPPTSSSGCGGGAGKPREEKRTALSKVVIRRLPPGLTKEQLEEQLRPLPAHDYFEFFAADLSLYPHLYSRAYINFRNPDDILLFRDRFDGYIFLDSKGLEYPAVVEFAPFQKIAKKKLRKKDAKTGSIEDDPEYKKFLETYCVEEEKTSANPETLLGEMEAKTRELIARRTTPLLEYIKNRKLEKQRIREEKREERRRRELEKKRLREEEKRRRREEERCKKKETDKQKKIAEKEVRIKLLKKPEKGEEPTTEKPKERGEEIDTGGGKQESCAPGAVVKARPMEGSLEEPQETSHSGSDKEHRDVERSQEQESEAQRYHVDDGRRHRAHHEPERLSRRSEDEQRWGKGPGQDRGKKGSQDSGAPGEAMERLGRAQRCDDSPAPRKERLANKDRPALQLYDPGARFRARECGGNRRICKAEGSGTGPEKREEAE</sequence>
<gene>
    <name type="primary">UPF3A</name>
    <name type="synonym">RENT3A</name>
    <name type="synonym">UPF3</name>
</gene>